<comment type="similarity">
    <text evidence="1">Belongs to the universal ribosomal protein uS2 family.</text>
</comment>
<proteinExistence type="inferred from homology"/>
<keyword id="KW-0687">Ribonucleoprotein</keyword>
<keyword id="KW-0689">Ribosomal protein</keyword>
<evidence type="ECO:0000255" key="1">
    <source>
        <dbReference type="HAMAP-Rule" id="MF_00291"/>
    </source>
</evidence>
<evidence type="ECO:0000256" key="2">
    <source>
        <dbReference type="SAM" id="MobiDB-lite"/>
    </source>
</evidence>
<evidence type="ECO:0000305" key="3"/>
<dbReference type="EMBL" id="CP000237">
    <property type="protein sequence ID" value="ABD45685.1"/>
    <property type="molecule type" value="Genomic_DNA"/>
</dbReference>
<dbReference type="RefSeq" id="WP_011452318.1">
    <property type="nucleotide sequence ID" value="NC_007798.1"/>
</dbReference>
<dbReference type="SMR" id="Q2GCI4"/>
<dbReference type="STRING" id="222891.NSE_0948"/>
<dbReference type="KEGG" id="nse:NSE_0948"/>
<dbReference type="eggNOG" id="COG0052">
    <property type="taxonomic scope" value="Bacteria"/>
</dbReference>
<dbReference type="HOGENOM" id="CLU_040318_2_1_5"/>
<dbReference type="OrthoDB" id="9808036at2"/>
<dbReference type="Proteomes" id="UP000001942">
    <property type="component" value="Chromosome"/>
</dbReference>
<dbReference type="GO" id="GO:0022627">
    <property type="term" value="C:cytosolic small ribosomal subunit"/>
    <property type="evidence" value="ECO:0007669"/>
    <property type="project" value="TreeGrafter"/>
</dbReference>
<dbReference type="GO" id="GO:0003735">
    <property type="term" value="F:structural constituent of ribosome"/>
    <property type="evidence" value="ECO:0007669"/>
    <property type="project" value="InterPro"/>
</dbReference>
<dbReference type="GO" id="GO:0006412">
    <property type="term" value="P:translation"/>
    <property type="evidence" value="ECO:0007669"/>
    <property type="project" value="UniProtKB-UniRule"/>
</dbReference>
<dbReference type="CDD" id="cd01425">
    <property type="entry name" value="RPS2"/>
    <property type="match status" value="1"/>
</dbReference>
<dbReference type="Gene3D" id="3.40.50.10490">
    <property type="entry name" value="Glucose-6-phosphate isomerase like protein, domain 1"/>
    <property type="match status" value="1"/>
</dbReference>
<dbReference type="Gene3D" id="1.10.287.610">
    <property type="entry name" value="Helix hairpin bin"/>
    <property type="match status" value="1"/>
</dbReference>
<dbReference type="HAMAP" id="MF_00291_B">
    <property type="entry name" value="Ribosomal_uS2_B"/>
    <property type="match status" value="1"/>
</dbReference>
<dbReference type="InterPro" id="IPR001865">
    <property type="entry name" value="Ribosomal_uS2"/>
</dbReference>
<dbReference type="InterPro" id="IPR005706">
    <property type="entry name" value="Ribosomal_uS2_bac/mit/plastid"/>
</dbReference>
<dbReference type="InterPro" id="IPR018130">
    <property type="entry name" value="Ribosomal_uS2_CS"/>
</dbReference>
<dbReference type="InterPro" id="IPR023591">
    <property type="entry name" value="Ribosomal_uS2_flav_dom_sf"/>
</dbReference>
<dbReference type="NCBIfam" id="TIGR01011">
    <property type="entry name" value="rpsB_bact"/>
    <property type="match status" value="1"/>
</dbReference>
<dbReference type="PANTHER" id="PTHR12534">
    <property type="entry name" value="30S RIBOSOMAL PROTEIN S2 PROKARYOTIC AND ORGANELLAR"/>
    <property type="match status" value="1"/>
</dbReference>
<dbReference type="PANTHER" id="PTHR12534:SF0">
    <property type="entry name" value="SMALL RIBOSOMAL SUBUNIT PROTEIN US2M"/>
    <property type="match status" value="1"/>
</dbReference>
<dbReference type="Pfam" id="PF00318">
    <property type="entry name" value="Ribosomal_S2"/>
    <property type="match status" value="1"/>
</dbReference>
<dbReference type="PRINTS" id="PR00395">
    <property type="entry name" value="RIBOSOMALS2"/>
</dbReference>
<dbReference type="SUPFAM" id="SSF52313">
    <property type="entry name" value="Ribosomal protein S2"/>
    <property type="match status" value="1"/>
</dbReference>
<dbReference type="PROSITE" id="PS00963">
    <property type="entry name" value="RIBOSOMAL_S2_2"/>
    <property type="match status" value="1"/>
</dbReference>
<gene>
    <name evidence="1" type="primary">rpsB</name>
    <name type="ordered locus">NSE_0948</name>
</gene>
<organism>
    <name type="scientific">Neorickettsia sennetsu (strain ATCC VR-367 / Miyayama)</name>
    <name type="common">Ehrlichia sennetsu</name>
    <dbReference type="NCBI Taxonomy" id="222891"/>
    <lineage>
        <taxon>Bacteria</taxon>
        <taxon>Pseudomonadati</taxon>
        <taxon>Pseudomonadota</taxon>
        <taxon>Alphaproteobacteria</taxon>
        <taxon>Rickettsiales</taxon>
        <taxon>Anaplasmataceae</taxon>
        <taxon>Neorickettsia</taxon>
    </lineage>
</organism>
<protein>
    <recommendedName>
        <fullName evidence="1">Small ribosomal subunit protein uS2</fullName>
    </recommendedName>
    <alternativeName>
        <fullName evidence="3">30S ribosomal protein S2</fullName>
    </alternativeName>
</protein>
<accession>Q2GCI4</accession>
<reference key="1">
    <citation type="journal article" date="2006" name="PLoS Genet.">
        <title>Comparative genomics of emerging human ehrlichiosis agents.</title>
        <authorList>
            <person name="Dunning Hotopp J.C."/>
            <person name="Lin M."/>
            <person name="Madupu R."/>
            <person name="Crabtree J."/>
            <person name="Angiuoli S.V."/>
            <person name="Eisen J.A."/>
            <person name="Seshadri R."/>
            <person name="Ren Q."/>
            <person name="Wu M."/>
            <person name="Utterback T.R."/>
            <person name="Smith S."/>
            <person name="Lewis M."/>
            <person name="Khouri H."/>
            <person name="Zhang C."/>
            <person name="Niu H."/>
            <person name="Lin Q."/>
            <person name="Ohashi N."/>
            <person name="Zhi N."/>
            <person name="Nelson W.C."/>
            <person name="Brinkac L.M."/>
            <person name="Dodson R.J."/>
            <person name="Rosovitz M.J."/>
            <person name="Sundaram J.P."/>
            <person name="Daugherty S.C."/>
            <person name="Davidsen T."/>
            <person name="Durkin A.S."/>
            <person name="Gwinn M.L."/>
            <person name="Haft D.H."/>
            <person name="Selengut J.D."/>
            <person name="Sullivan S.A."/>
            <person name="Zafar N."/>
            <person name="Zhou L."/>
            <person name="Benahmed F."/>
            <person name="Forberger H."/>
            <person name="Halpin R."/>
            <person name="Mulligan S."/>
            <person name="Robinson J."/>
            <person name="White O."/>
            <person name="Rikihisa Y."/>
            <person name="Tettelin H."/>
        </authorList>
    </citation>
    <scope>NUCLEOTIDE SEQUENCE [LARGE SCALE GENOMIC DNA]</scope>
    <source>
        <strain>ATCC VR-367 / Miyayama</strain>
    </source>
</reference>
<sequence length="298" mass="33293">MQSIFDRVTVKNLFEVGAHLGHKTRFWNPKMVSYIYGTSNAKTHIVDLQKTVPMLRTALNAISDVAANSGRVLFVGTKMQACDIIKEEATRCGQYYVNLRWPSGMFTNWNTVSKSVKKLVHYEKLLEQEGDVLSKKERLSINRKRERIEKYLGGVRKMGGLPNIIFVIDPKKEHIAVEEAWKLGIPVVAVVDTNCDPSKITYAIPGNDDSLRCIEYYCSLVADAVLVGIESELQRKQSKELDDKADEKAAKVSHSDGQKKGASIRAGTDKAALQKRKVSPKSEKQDNVDAAKLPENKG</sequence>
<feature type="chain" id="PRO_0000352018" description="Small ribosomal subunit protein uS2">
    <location>
        <begin position="1"/>
        <end position="298"/>
    </location>
</feature>
<feature type="region of interest" description="Disordered" evidence="2">
    <location>
        <begin position="237"/>
        <end position="298"/>
    </location>
</feature>
<feature type="compositionally biased region" description="Basic and acidic residues" evidence="2">
    <location>
        <begin position="237"/>
        <end position="259"/>
    </location>
</feature>
<feature type="compositionally biased region" description="Basic and acidic residues" evidence="2">
    <location>
        <begin position="280"/>
        <end position="298"/>
    </location>
</feature>
<name>RS2_NEOSM</name>